<name>COX8_YEAST</name>
<proteinExistence type="evidence at protein level"/>
<comment type="function">
    <text evidence="10">Component of the cytochrome c oxidase, the last enzyme in the mitochondrial electron transport chain which drives oxidative phosphorylation. The respiratory chain contains 3 multisubunit complexes succinate dehydrogenase (complex II, CII), ubiquinol-cytochrome c oxidoreductase (cytochrome b-c1 complex, complex III, CIII) and cytochrome c oxidase (complex IV, CIV), that cooperate to transfer electrons derived from NADH and succinate to molecular oxygen, creating an electrochemical gradient over the inner membrane that drives transmembrane transport and the ATP synthase. Cytochrome c oxidase is the component of the respiratory chain that catalyzes the reduction of oxygen to water. Electrons originating from reduced cytochrome c in the intermembrane space (IMS) are transferred via the dinuclear copper A center (CU(A)) of COX2 and heme A of COX1 to the active site in COX1, a binuclear center (BNC) formed by heme A3 and copper B (CU(B)). The BNC reduces molecular oxygen to 2 water molecules using 4 electrons from cytochrome c in the IMS and 4 protons from the mitochondrial matrix.</text>
</comment>
<comment type="pathway">
    <text>Energy metabolism; oxidative phosphorylation.</text>
</comment>
<comment type="subunit">
    <text evidence="1 2 5 6 8">Component of the cytochrome c oxidase (complex IV, CIV), a multisubunit enzyme composed of 12 subunits. The complex is composed of a catalytic core of 3 subunits COX1, COX2 and COX3, encoded in the mitochondrial DNA, and 9 supernumerary subunits COX4, COX5A (or COX5B), COX6, COX7, COX8, COX9, COX12, COX13 and COX26, which are encoded in the nuclear genome (PubMed:30598554, PubMed:30598556, PubMed:7851399). The complex exists as a monomer or a dimer and forms supercomplexes (SCs) in the inner mitochondrial membrane with a dimer of ubiquinol-cytochrome c oxidoreductase (cytochrome b-c1 complex, complex III, CIII), resulting in 2 different assemblies (supercomplexes III(2)IV and III(2)IV(2)) (PubMed:10764779, PubMed:10775262, PubMed:30598554, PubMed:30598556).</text>
</comment>
<comment type="subcellular location">
    <subcellularLocation>
        <location evidence="5">Mitochondrion inner membrane</location>
        <topology evidence="5">Single-pass membrane protein</topology>
    </subcellularLocation>
</comment>
<comment type="miscellaneous">
    <text evidence="4">Present with 672 molecules/cell in log phase SD medium.</text>
</comment>
<comment type="similarity">
    <text evidence="9">Belongs to the cytochrome c oxidase VIIc family.</text>
</comment>
<dbReference type="EMBL" id="J02634">
    <property type="protein sequence ID" value="AAA34522.1"/>
    <property type="molecule type" value="Genomic_DNA"/>
</dbReference>
<dbReference type="EMBL" id="U19729">
    <property type="protein sequence ID" value="AAB82353.1"/>
    <property type="molecule type" value="Genomic_DNA"/>
</dbReference>
<dbReference type="EMBL" id="AY558228">
    <property type="protein sequence ID" value="AAS56554.1"/>
    <property type="molecule type" value="Genomic_DNA"/>
</dbReference>
<dbReference type="EMBL" id="BK006945">
    <property type="protein sequence ID" value="DAA09696.1"/>
    <property type="molecule type" value="Genomic_DNA"/>
</dbReference>
<dbReference type="PIR" id="A25353">
    <property type="entry name" value="A25353"/>
</dbReference>
<dbReference type="RefSeq" id="NP_013499.1">
    <property type="nucleotide sequence ID" value="NM_001182283.1"/>
</dbReference>
<dbReference type="PDB" id="6GIQ">
    <property type="method" value="EM"/>
    <property type="resolution" value="3.23 A"/>
    <property type="chains" value="h=1-78"/>
</dbReference>
<dbReference type="PDB" id="6HU9">
    <property type="method" value="EM"/>
    <property type="resolution" value="3.35 A"/>
    <property type="chains" value="h/t=28-74"/>
</dbReference>
<dbReference type="PDB" id="6T0B">
    <property type="method" value="EM"/>
    <property type="resolution" value="2.80 A"/>
    <property type="chains" value="h/u=28-78"/>
</dbReference>
<dbReference type="PDB" id="6T15">
    <property type="method" value="EM"/>
    <property type="resolution" value="3.29 A"/>
    <property type="chains" value="h=28-78"/>
</dbReference>
<dbReference type="PDB" id="6YMX">
    <property type="method" value="EM"/>
    <property type="resolution" value="3.17 A"/>
    <property type="chains" value="h=28-78"/>
</dbReference>
<dbReference type="PDB" id="6YMY">
    <property type="method" value="EM"/>
    <property type="resolution" value="3.41 A"/>
    <property type="chains" value="h=28-78"/>
</dbReference>
<dbReference type="PDB" id="7Z10">
    <property type="method" value="EM"/>
    <property type="resolution" value="3.87 A"/>
    <property type="chains" value="h=28-74"/>
</dbReference>
<dbReference type="PDB" id="8DH6">
    <property type="method" value="EM"/>
    <property type="resolution" value="2.94 A"/>
    <property type="chains" value="h=28-78"/>
</dbReference>
<dbReference type="PDB" id="8E7S">
    <property type="method" value="EM"/>
    <property type="resolution" value="3.20 A"/>
    <property type="chains" value="M/m=1-78"/>
</dbReference>
<dbReference type="PDB" id="8EC0">
    <property type="method" value="EM"/>
    <property type="resolution" value="3.30 A"/>
    <property type="chains" value="M=1-78"/>
</dbReference>
<dbReference type="PDB" id="9ETZ">
    <property type="method" value="EM"/>
    <property type="resolution" value="2.40 A"/>
    <property type="chains" value="h=28-78"/>
</dbReference>
<dbReference type="PDBsum" id="6GIQ"/>
<dbReference type="PDBsum" id="6HU9"/>
<dbReference type="PDBsum" id="6T0B"/>
<dbReference type="PDBsum" id="6T15"/>
<dbReference type="PDBsum" id="6YMX"/>
<dbReference type="PDBsum" id="6YMY"/>
<dbReference type="PDBsum" id="7Z10"/>
<dbReference type="PDBsum" id="8DH6"/>
<dbReference type="PDBsum" id="8E7S"/>
<dbReference type="PDBsum" id="8EC0"/>
<dbReference type="PDBsum" id="9ETZ"/>
<dbReference type="EMDB" id="EMD-10318"/>
<dbReference type="EMDB" id="EMD-10334"/>
<dbReference type="EMDB" id="EMD-10335"/>
<dbReference type="EMDB" id="EMD-10340"/>
<dbReference type="EMDB" id="EMD-10375"/>
<dbReference type="EMDB" id="EMD-10376"/>
<dbReference type="EMDB" id="EMD-10847"/>
<dbReference type="EMDB" id="EMD-10848"/>
<dbReference type="EMDB" id="EMD-14436"/>
<dbReference type="EMDB" id="EMD-19963"/>
<dbReference type="EMDB" id="EMD-27430"/>
<dbReference type="EMDB" id="EMD-27940"/>
<dbReference type="EMDB" id="EMD-28011"/>
<dbReference type="SMR" id="P04039"/>
<dbReference type="BioGRID" id="31654">
    <property type="interactions" value="198"/>
</dbReference>
<dbReference type="ComplexPortal" id="CPX-1721">
    <property type="entry name" value="Mitochondrial respiratory chain complex IV, COX5A variant"/>
</dbReference>
<dbReference type="ComplexPortal" id="CPX-1722">
    <property type="entry name" value="Mitochondrial respiratory chain complex IV, COX5B variant"/>
</dbReference>
<dbReference type="DIP" id="DIP-5445N"/>
<dbReference type="FunCoup" id="P04039">
    <property type="interactions" value="161"/>
</dbReference>
<dbReference type="IntAct" id="P04039">
    <property type="interactions" value="7"/>
</dbReference>
<dbReference type="STRING" id="4932.YLR395C"/>
<dbReference type="TCDB" id="3.D.4.8.1">
    <property type="family name" value="the proton-translocating cytochrome oxidase (cox) superfamily"/>
</dbReference>
<dbReference type="PaxDb" id="4932-YLR395C"/>
<dbReference type="PeptideAtlas" id="P04039"/>
<dbReference type="EnsemblFungi" id="YLR395C_mRNA">
    <property type="protein sequence ID" value="YLR395C"/>
    <property type="gene ID" value="YLR395C"/>
</dbReference>
<dbReference type="GeneID" id="851111"/>
<dbReference type="KEGG" id="sce:YLR395C"/>
<dbReference type="AGR" id="SGD:S000004387"/>
<dbReference type="SGD" id="S000004387">
    <property type="gene designation" value="COX8"/>
</dbReference>
<dbReference type="VEuPathDB" id="FungiDB:YLR395C"/>
<dbReference type="eggNOG" id="KOG4527">
    <property type="taxonomic scope" value="Eukaryota"/>
</dbReference>
<dbReference type="HOGENOM" id="CLU_169812_0_0_1"/>
<dbReference type="InParanoid" id="P04039"/>
<dbReference type="OMA" id="IHNRKIP"/>
<dbReference type="OrthoDB" id="9974841at2759"/>
<dbReference type="BioCyc" id="MetaCyc:YLR395C-MONOMER"/>
<dbReference type="BioCyc" id="YEAST:YLR395C-MONOMER"/>
<dbReference type="UniPathway" id="UPA00705"/>
<dbReference type="BioGRID-ORCS" id="851111">
    <property type="hits" value="0 hits in 10 CRISPR screens"/>
</dbReference>
<dbReference type="PRO" id="PR:P04039"/>
<dbReference type="Proteomes" id="UP000002311">
    <property type="component" value="Chromosome XII"/>
</dbReference>
<dbReference type="RNAct" id="P04039">
    <property type="molecule type" value="protein"/>
</dbReference>
<dbReference type="GO" id="GO:0005743">
    <property type="term" value="C:mitochondrial inner membrane"/>
    <property type="evidence" value="ECO:0007669"/>
    <property type="project" value="UniProtKB-SubCell"/>
</dbReference>
<dbReference type="GO" id="GO:0005739">
    <property type="term" value="C:mitochondrion"/>
    <property type="evidence" value="ECO:0007005"/>
    <property type="project" value="SGD"/>
</dbReference>
<dbReference type="GO" id="GO:0045277">
    <property type="term" value="C:respiratory chain complex IV"/>
    <property type="evidence" value="ECO:0000314"/>
    <property type="project" value="SGD"/>
</dbReference>
<dbReference type="GO" id="GO:0016491">
    <property type="term" value="F:oxidoreductase activity"/>
    <property type="evidence" value="ECO:0007669"/>
    <property type="project" value="UniProtKB-KW"/>
</dbReference>
<dbReference type="GO" id="GO:0006123">
    <property type="term" value="P:mitochondrial electron transport, cytochrome c to oxygen"/>
    <property type="evidence" value="ECO:0000314"/>
    <property type="project" value="SGD"/>
</dbReference>
<dbReference type="GO" id="GO:1902600">
    <property type="term" value="P:proton transmembrane transport"/>
    <property type="evidence" value="ECO:0007669"/>
    <property type="project" value="GOC"/>
</dbReference>
<dbReference type="CDD" id="cd00929">
    <property type="entry name" value="Cyt_c_Oxidase_VIIc"/>
    <property type="match status" value="1"/>
</dbReference>
<dbReference type="FunFam" id="4.10.49.10:FF:000001">
    <property type="entry name" value="Cytochrome c oxidase subunit 7C"/>
    <property type="match status" value="1"/>
</dbReference>
<dbReference type="Gene3D" id="4.10.49.10">
    <property type="entry name" value="Cytochrome c oxidase subunit VIIc"/>
    <property type="match status" value="1"/>
</dbReference>
<dbReference type="InterPro" id="IPR004202">
    <property type="entry name" value="COX7C/Cox8"/>
</dbReference>
<dbReference type="InterPro" id="IPR036636">
    <property type="entry name" value="COX7C/Cox8_sf"/>
</dbReference>
<dbReference type="PANTHER" id="PTHR13313:SF0">
    <property type="entry name" value="CYTOCHROME C OXIDASE SUBUNIT 7C, MITOCHONDRIAL"/>
    <property type="match status" value="1"/>
</dbReference>
<dbReference type="PANTHER" id="PTHR13313">
    <property type="entry name" value="CYTOCHROME C OXIDASE SUBUNIT VIIC"/>
    <property type="match status" value="1"/>
</dbReference>
<dbReference type="Pfam" id="PF02935">
    <property type="entry name" value="COX7C"/>
    <property type="match status" value="1"/>
</dbReference>
<dbReference type="SUPFAM" id="SSF81427">
    <property type="entry name" value="Mitochondrial cytochrome c oxidase subunit VIIc (aka VIIIa)"/>
    <property type="match status" value="1"/>
</dbReference>
<organism>
    <name type="scientific">Saccharomyces cerevisiae (strain ATCC 204508 / S288c)</name>
    <name type="common">Baker's yeast</name>
    <dbReference type="NCBI Taxonomy" id="559292"/>
    <lineage>
        <taxon>Eukaryota</taxon>
        <taxon>Fungi</taxon>
        <taxon>Dikarya</taxon>
        <taxon>Ascomycota</taxon>
        <taxon>Saccharomycotina</taxon>
        <taxon>Saccharomycetes</taxon>
        <taxon>Saccharomycetales</taxon>
        <taxon>Saccharomycetaceae</taxon>
        <taxon>Saccharomyces</taxon>
    </lineage>
</organism>
<protein>
    <recommendedName>
        <fullName>Cytochrome c oxidase subunit 8, mitochondrial</fullName>
    </recommendedName>
    <alternativeName>
        <fullName>Cytochrome c oxidase polypeptide VIII</fullName>
    </alternativeName>
</protein>
<sequence length="78" mass="8907">MLCQQMIRTTAKRSSNIMTRPIIMKRSVHFKDGVYENIPFKVKGRKTPYALSHFGFFAIGFAVPFVACYVQLKKSGAF</sequence>
<gene>
    <name type="primary">COX8</name>
    <name type="ordered locus">YLR395C</name>
    <name type="ORF">L8084.14</name>
</gene>
<reference key="1">
    <citation type="journal article" date="1986" name="J. Biol. Chem.">
        <title>COX8, the structural gene for yeast cytochrome c oxidase subunit VIII. DNA sequence and gene disruption indicate that subunit VIII is required for maximal levels of cellular respiration and is derived from a precursor which is extended at both its NH2 and COOH termini.</title>
        <authorList>
            <person name="Patterson T.E."/>
            <person name="Poyton R.O."/>
        </authorList>
    </citation>
    <scope>NUCLEOTIDE SEQUENCE [GENOMIC DNA]</scope>
</reference>
<reference key="2">
    <citation type="journal article" date="1997" name="Nature">
        <title>The nucleotide sequence of Saccharomyces cerevisiae chromosome XII.</title>
        <authorList>
            <person name="Johnston M."/>
            <person name="Hillier L.W."/>
            <person name="Riles L."/>
            <person name="Albermann K."/>
            <person name="Andre B."/>
            <person name="Ansorge W."/>
            <person name="Benes V."/>
            <person name="Brueckner M."/>
            <person name="Delius H."/>
            <person name="Dubois E."/>
            <person name="Duesterhoeft A."/>
            <person name="Entian K.-D."/>
            <person name="Floeth M."/>
            <person name="Goffeau A."/>
            <person name="Hebling U."/>
            <person name="Heumann K."/>
            <person name="Heuss-Neitzel D."/>
            <person name="Hilbert H."/>
            <person name="Hilger F."/>
            <person name="Kleine K."/>
            <person name="Koetter P."/>
            <person name="Louis E.J."/>
            <person name="Messenguy F."/>
            <person name="Mewes H.-W."/>
            <person name="Miosga T."/>
            <person name="Moestl D."/>
            <person name="Mueller-Auer S."/>
            <person name="Nentwich U."/>
            <person name="Obermaier B."/>
            <person name="Piravandi E."/>
            <person name="Pohl T.M."/>
            <person name="Portetelle D."/>
            <person name="Purnelle B."/>
            <person name="Rechmann S."/>
            <person name="Rieger M."/>
            <person name="Rinke M."/>
            <person name="Rose M."/>
            <person name="Scharfe M."/>
            <person name="Scherens B."/>
            <person name="Scholler P."/>
            <person name="Schwager C."/>
            <person name="Schwarz S."/>
            <person name="Underwood A.P."/>
            <person name="Urrestarazu L.A."/>
            <person name="Vandenbol M."/>
            <person name="Verhasselt P."/>
            <person name="Vierendeels F."/>
            <person name="Voet M."/>
            <person name="Volckaert G."/>
            <person name="Voss H."/>
            <person name="Wambutt R."/>
            <person name="Wedler E."/>
            <person name="Wedler H."/>
            <person name="Zimmermann F.K."/>
            <person name="Zollner A."/>
            <person name="Hani J."/>
            <person name="Hoheisel J.D."/>
        </authorList>
    </citation>
    <scope>NUCLEOTIDE SEQUENCE [LARGE SCALE GENOMIC DNA]</scope>
    <source>
        <strain>ATCC 204508 / S288c</strain>
    </source>
</reference>
<reference key="3">
    <citation type="journal article" date="2014" name="G3 (Bethesda)">
        <title>The reference genome sequence of Saccharomyces cerevisiae: Then and now.</title>
        <authorList>
            <person name="Engel S.R."/>
            <person name="Dietrich F.S."/>
            <person name="Fisk D.G."/>
            <person name="Binkley G."/>
            <person name="Balakrishnan R."/>
            <person name="Costanzo M.C."/>
            <person name="Dwight S.S."/>
            <person name="Hitz B.C."/>
            <person name="Karra K."/>
            <person name="Nash R.S."/>
            <person name="Weng S."/>
            <person name="Wong E.D."/>
            <person name="Lloyd P."/>
            <person name="Skrzypek M.S."/>
            <person name="Miyasato S.R."/>
            <person name="Simison M."/>
            <person name="Cherry J.M."/>
        </authorList>
    </citation>
    <scope>GENOME REANNOTATION</scope>
    <source>
        <strain>ATCC 204508 / S288c</strain>
    </source>
</reference>
<reference key="4">
    <citation type="journal article" date="2007" name="Genome Res.">
        <title>Approaching a complete repository of sequence-verified protein-encoding clones for Saccharomyces cerevisiae.</title>
        <authorList>
            <person name="Hu Y."/>
            <person name="Rolfs A."/>
            <person name="Bhullar B."/>
            <person name="Murthy T.V.S."/>
            <person name="Zhu C."/>
            <person name="Berger M.F."/>
            <person name="Camargo A.A."/>
            <person name="Kelley F."/>
            <person name="McCarron S."/>
            <person name="Jepson D."/>
            <person name="Richardson A."/>
            <person name="Raphael J."/>
            <person name="Moreira D."/>
            <person name="Taycher E."/>
            <person name="Zuo D."/>
            <person name="Mohr S."/>
            <person name="Kane M.F."/>
            <person name="Williamson J."/>
            <person name="Simpson A.J.G."/>
            <person name="Bulyk M.L."/>
            <person name="Harlow E."/>
            <person name="Marsischky G."/>
            <person name="Kolodner R.D."/>
            <person name="LaBaer J."/>
        </authorList>
    </citation>
    <scope>NUCLEOTIDE SEQUENCE [GENOMIC DNA]</scope>
    <source>
        <strain>ATCC 204508 / S288c</strain>
    </source>
</reference>
<reference key="5">
    <citation type="journal article" date="1984" name="J. Biol. Chem.">
        <title>The nuclear-coded subunits of yeast cytochrome c oxidase. II. The amino acid sequence of subunit VIII and a model for its disposition in the inner mitochondrial membrane.</title>
        <authorList>
            <person name="Power S.D."/>
            <person name="Lochrie M.A."/>
            <person name="Patterson T.E."/>
            <person name="Poyton R.O."/>
        </authorList>
    </citation>
    <scope>PROTEIN SEQUENCE OF 28-74</scope>
</reference>
<reference key="6">
    <citation type="journal article" date="1992" name="J. Biol. Chem.">
        <title>Purification of yeast cytochrome c oxidase with a subunit composition resembling the mammalian enzyme.</title>
        <authorList>
            <person name="Taanman J.-W."/>
            <person name="Capaldi R.A."/>
        </authorList>
    </citation>
    <scope>PROTEIN SEQUENCE OF 28-33</scope>
</reference>
<reference key="7">
    <citation type="journal article" date="1995" name="Eur. J. Biochem.">
        <title>Kinetic properties and ligand binding of the eleven-subunit cytochrome-c oxidase from Saccharomyces cerevisiae isolated with a novel large-scale purification method.</title>
        <authorList>
            <person name="Geier B.M."/>
            <person name="Schagger H."/>
            <person name="Ortwein C."/>
            <person name="Link T.A."/>
            <person name="Hagen W.R."/>
            <person name="Brandt U."/>
            <person name="Von Jagow G."/>
        </authorList>
    </citation>
    <scope>PROTEIN SEQUENCE OF 28-42</scope>
    <scope>COMPOSITION OF THE CYTOCHROME C OXIDASE COMPLEX</scope>
</reference>
<reference key="8">
    <citation type="journal article" date="2000" name="EMBO J.">
        <title>Supercomplexes in the respiratory chains of yeast and mammalian mitochondria.</title>
        <authorList>
            <person name="Schaegger H."/>
            <person name="Pfeiffer K."/>
        </authorList>
    </citation>
    <scope>FORMATION OF CYTOCHROME BC1-CYTOCHROME C OXIDASE SUPERCOMPLEX</scope>
</reference>
<reference key="9">
    <citation type="journal article" date="2000" name="J. Biol. Chem.">
        <title>The cytochrome bc1 and cytochrome c oxidase complexes associate to form a single supracomplex in yeast mitochondria.</title>
        <authorList>
            <person name="Cruciat C.M."/>
            <person name="Brunner S."/>
            <person name="Baumann F."/>
            <person name="Neupert W."/>
            <person name="Stuart R.A."/>
        </authorList>
    </citation>
    <scope>FORMATION OF CYTOCHROME BC1-CYTOCHROME C OXIDASE SUPERCOMPLEX</scope>
</reference>
<reference key="10">
    <citation type="journal article" date="2003" name="Nature">
        <title>Global analysis of protein expression in yeast.</title>
        <authorList>
            <person name="Ghaemmaghami S."/>
            <person name="Huh W.-K."/>
            <person name="Bower K."/>
            <person name="Howson R.W."/>
            <person name="Belle A."/>
            <person name="Dephoure N."/>
            <person name="O'Shea E.K."/>
            <person name="Weissman J.S."/>
        </authorList>
    </citation>
    <scope>LEVEL OF PROTEIN EXPRESSION [LARGE SCALE ANALYSIS]</scope>
</reference>
<reference key="11">
    <citation type="journal article" date="2019" name="Nat. Struct. Mol. Biol.">
        <title>Cryo-EM structure of the yeast respiratory supercomplex.</title>
        <authorList>
            <person name="Rathore S."/>
            <person name="Berndtsson J."/>
            <person name="Marin-Buera L."/>
            <person name="Conrad J."/>
            <person name="Carroni M."/>
            <person name="Brzezinski P."/>
            <person name="Ott M."/>
        </authorList>
    </citation>
    <scope>STRUCTURE BY ELECTRON MICROSCOPY (3.23 ANGSTROMS)</scope>
</reference>
<reference key="12">
    <citation type="journal article" date="2019" name="Nat. Struct. Mol. Biol.">
        <title>Structure of yeast cytochrome c oxidase in a supercomplex with cytochrome bc1.</title>
        <authorList>
            <person name="Hartley A.M."/>
            <person name="Lukoyanova N."/>
            <person name="Zhang Y."/>
            <person name="Cabrera-Orefice A."/>
            <person name="Arnold S."/>
            <person name="Meunier B."/>
            <person name="Pinotsis N."/>
            <person name="Marechal A."/>
        </authorList>
    </citation>
    <scope>STRUCTURE BY ELECTRON MICROSCOPY (3.35 ANGSTROMS)</scope>
    <scope>FUNCTION</scope>
</reference>
<keyword id="KW-0002">3D-structure</keyword>
<keyword id="KW-0165">Cleavage on pair of basic residues</keyword>
<keyword id="KW-0903">Direct protein sequencing</keyword>
<keyword id="KW-0472">Membrane</keyword>
<keyword id="KW-0496">Mitochondrion</keyword>
<keyword id="KW-0999">Mitochondrion inner membrane</keyword>
<keyword id="KW-0560">Oxidoreductase</keyword>
<keyword id="KW-1185">Reference proteome</keyword>
<keyword id="KW-0809">Transit peptide</keyword>
<keyword id="KW-0812">Transmembrane</keyword>
<keyword id="KW-1133">Transmembrane helix</keyword>
<feature type="transit peptide" description="Mitochondrion" evidence="3 7 8">
    <location>
        <begin position="1"/>
        <end position="27"/>
    </location>
</feature>
<feature type="chain" id="PRO_0000006173" description="Cytochrome c oxidase subunit 8, mitochondrial">
    <location>
        <begin position="28"/>
        <end position="74"/>
    </location>
</feature>
<feature type="propeptide" id="PRO_0000006174" evidence="7">
    <location>
        <begin position="75"/>
        <end position="78"/>
    </location>
</feature>
<feature type="topological domain" description="Mitochondrial matrix" evidence="5">
    <location>
        <begin position="28"/>
        <end position="51"/>
    </location>
</feature>
<feature type="transmembrane region" description="Helical" evidence="5">
    <location>
        <begin position="52"/>
        <end position="73"/>
    </location>
</feature>
<feature type="topological domain" description="Mitochondrial intermembrane" evidence="5">
    <location>
        <position position="74"/>
    </location>
</feature>
<feature type="sequence conflict" description="In Ref. 5; AA sequence." evidence="9" ref="5">
    <original>T</original>
    <variation>C</variation>
    <location>
        <position position="47"/>
    </location>
</feature>
<feature type="sequence conflict" description="In Ref. 5; AA sequence." evidence="9" ref="5">
    <original>C</original>
    <variation>T</variation>
    <location>
        <position position="68"/>
    </location>
</feature>
<feature type="strand" evidence="11">
    <location>
        <begin position="33"/>
        <end position="40"/>
    </location>
</feature>
<feature type="helix" evidence="11">
    <location>
        <begin position="49"/>
        <end position="61"/>
    </location>
</feature>
<feature type="helix" evidence="11">
    <location>
        <begin position="63"/>
        <end position="72"/>
    </location>
</feature>
<feature type="turn" evidence="11">
    <location>
        <begin position="73"/>
        <end position="76"/>
    </location>
</feature>
<evidence type="ECO:0000269" key="1">
    <source>
    </source>
</evidence>
<evidence type="ECO:0000269" key="2">
    <source>
    </source>
</evidence>
<evidence type="ECO:0000269" key="3">
    <source>
    </source>
</evidence>
<evidence type="ECO:0000269" key="4">
    <source>
    </source>
</evidence>
<evidence type="ECO:0000269" key="5">
    <source>
    </source>
</evidence>
<evidence type="ECO:0000269" key="6">
    <source>
    </source>
</evidence>
<evidence type="ECO:0000269" key="7">
    <source>
    </source>
</evidence>
<evidence type="ECO:0000269" key="8">
    <source>
    </source>
</evidence>
<evidence type="ECO:0000305" key="9"/>
<evidence type="ECO:0000305" key="10">
    <source>
    </source>
</evidence>
<evidence type="ECO:0007829" key="11">
    <source>
        <dbReference type="PDB" id="9ETZ"/>
    </source>
</evidence>
<accession>P04039</accession>
<accession>D6VZ30</accession>